<evidence type="ECO:0000255" key="1"/>
<evidence type="ECO:0000255" key="2">
    <source>
        <dbReference type="PIRNR" id="PIRNR011018"/>
    </source>
</evidence>
<evidence type="ECO:0000255" key="3">
    <source>
        <dbReference type="PROSITE-ProRule" id="PRU00498"/>
    </source>
</evidence>
<evidence type="ECO:0000269" key="4">
    <source>
    </source>
</evidence>
<evidence type="ECO:0000269" key="5">
    <source>
    </source>
</evidence>
<evidence type="ECO:0000269" key="6">
    <source>
    </source>
</evidence>
<evidence type="ECO:0000303" key="7">
    <source>
    </source>
</evidence>
<evidence type="ECO:0000303" key="8">
    <source>
    </source>
</evidence>
<evidence type="ECO:0000305" key="9"/>
<evidence type="ECO:0000305" key="10">
    <source>
    </source>
</evidence>
<evidence type="ECO:0000312" key="11">
    <source>
        <dbReference type="Proteomes" id="UP000001940"/>
    </source>
</evidence>
<evidence type="ECO:0000312" key="12">
    <source>
        <dbReference type="WormBase" id="T05F1.1a"/>
    </source>
</evidence>
<evidence type="ECO:0000312" key="13">
    <source>
        <dbReference type="WormBase" id="T05F1.1b"/>
    </source>
</evidence>
<feature type="signal peptide" evidence="1">
    <location>
        <begin position="1"/>
        <end position="29"/>
    </location>
</feature>
<feature type="chain" id="PRO_5002683601" description="Nicalin" evidence="1">
    <location>
        <begin position="30"/>
        <end position="563"/>
    </location>
</feature>
<feature type="topological domain" description="Lumenal" evidence="9">
    <location>
        <begin position="30"/>
        <end position="522"/>
    </location>
</feature>
<feature type="transmembrane region" description="Helical" evidence="1">
    <location>
        <begin position="523"/>
        <end position="543"/>
    </location>
</feature>
<feature type="topological domain" description="Cytoplasmic" evidence="9">
    <location>
        <begin position="544"/>
        <end position="563"/>
    </location>
</feature>
<feature type="glycosylation site" description="N-linked (GlcNAc...) asparagine" evidence="3">
    <location>
        <position position="232"/>
    </location>
</feature>
<feature type="splice variant" id="VSP_060399" description="In isoform a." evidence="9">
    <location>
        <begin position="301"/>
        <end position="303"/>
    </location>
</feature>
<feature type="splice variant" id="VSP_060400" description="In isoform a." evidence="9">
    <original>KYFS</original>
    <variation>N</variation>
    <location>
        <begin position="345"/>
        <end position="348"/>
    </location>
</feature>
<sequence>MQDEIIDFFRSPALLFYMTLMLTICVVNGSQQVGEVVETEFHAYRLHQYEISGNIYGCKNYRVSYEAVSLGARTLRRTMVTTWRDLLTTDVDDMWALSTGAVLIFIPDNLDELNDIDRKAFIDLEAKLLSAKTDLAVYVAPFNDDAVSILHDVNTRSEKAPTALQHLLQSLSGNTISITSSDQSPELPPSYKPLNIVGRLSSGDRAAPTIAFVAHYDTQSAVPGVSPGADSNGSGIVALLELLAVLSKFYDSPSTRPPYNILFIWTAAGKLNYQGTRHWIDEYQKGFDSADYAKSGLSRKGFSDDRVDLAICIEAIGRKTGGFFMHAGKTPSENSVAAQLLRRLKYFSSISPKKNIELVTKKISLTTVSAWEHEKFNIKRMPAITLSTLPSPSDPARNSILDLPSALDEDELIDNIRLIGEAVLGYILDLPESGPSSDSRVKSEATMLSKDAVDKQRVHHFIRQFASRPRPVGDQRATESITSNLASVAAGYGNVFKSAVTITDAKAFGVTQNRLVAERVKPAVFELVIAAGVFTYLSAFYYIATHSQNTIEGTVAAIRKSIF</sequence>
<proteinExistence type="evidence at protein level"/>
<keyword id="KW-0025">Alternative splicing</keyword>
<keyword id="KW-0256">Endoplasmic reticulum</keyword>
<keyword id="KW-0325">Glycoprotein</keyword>
<keyword id="KW-0472">Membrane</keyword>
<keyword id="KW-1185">Reference proteome</keyword>
<keyword id="KW-0732">Signal</keyword>
<keyword id="KW-0812">Transmembrane</keyword>
<keyword id="KW-1133">Transmembrane helix</keyword>
<comment type="function">
    <text evidence="4 5 6">Involved in the recognition and selection of protein complexes to exit the endoplasmic reticulum (ER) (PubMed:19609303, PubMed:24567339). In muscles, regulates levamisole-sensitive nicotinic acetylcholine receptor (L-AChR) subunit composition, possibly by allowing only specific L-AChR subunit combinations to exit the ER (PubMed:19609303). Specifically, may promote the inclusion of alpha subunits unc-38 and unc-29 into L-AChR (PubMed:19609303). Regulates L-AChR sensitivity to agonists such as nicotine and levamisole at neuro-muscular junctions (PubMed:15990870, PubMed:19609303). In touch neurons, may prevent ER exit of incorrectly folded mec-4-mec-10 ion channel (PubMed:24567339).</text>
</comment>
<comment type="subunit">
    <text evidence="4 5">May interact with the levamisole-sensitive nicotinic acetylcholine receptor (L-AChR) (PubMed:15990870). May interact with nra-4 in the ER (PubMed:19609303).</text>
</comment>
<comment type="subcellular location">
    <subcellularLocation>
        <location evidence="5">Endoplasmic reticulum membrane</location>
        <topology evidence="1">Single-pass type I membrane protein</topology>
    </subcellularLocation>
    <text evidence="5">During the assembly of acetylcholine receptor in muscles, colocalizes with L-AChR component unc-29 in the ER.</text>
</comment>
<comment type="alternative products">
    <event type="alternative splicing"/>
    <isoform>
        <id>A5JYX8-1</id>
        <name evidence="13">b</name>
        <sequence type="displayed"/>
    </isoform>
    <isoform>
        <id>A5JYX8-2</id>
        <name evidence="12">a</name>
        <sequence type="described" ref="VSP_060399 VSP_060400"/>
    </isoform>
</comment>
<comment type="tissue specificity">
    <text evidence="5">Expressed in body wall, pharyngeal, and vulval muscles, excretory canal cell, head and motor neurons, and vulval epithelium.</text>
</comment>
<comment type="disruption phenotype">
    <text evidence="4 6">RNAi-mediated knockdown causes a moderate resistance to nicotine-induced paralysis (PubMed:15990870). RNAi-mediated knockdown in neurons in a hyperactive mec-10 (A673V) mutant background increases touch neuron (TRN) cell death (PubMed:24567339).</text>
</comment>
<comment type="similarity">
    <text evidence="2">Belongs to the nicastrin family.</text>
</comment>
<comment type="caution">
    <text evidence="10">Although it contains a putative aminopeptidase domain, the critical residues for Zn(2+) binding and thus for catalytic activity are not conserved suggesting that nra-2 lacks peptidase activity.</text>
</comment>
<reference evidence="11" key="1">
    <citation type="journal article" date="1998" name="Science">
        <title>Genome sequence of the nematode C. elegans: a platform for investigating biology.</title>
        <authorList>
            <consortium name="The C. elegans sequencing consortium"/>
        </authorList>
    </citation>
    <scope>NUCLEOTIDE SEQUENCE [LARGE SCALE GENOMIC DNA]</scope>
    <source>
        <strain evidence="11">Bristol N2</strain>
    </source>
</reference>
<reference evidence="9" key="2">
    <citation type="journal article" date="2005" name="EMBO J.">
        <title>Identification and characterization of novel nicotinic receptor-associated proteins in Caenorhabditis elegans.</title>
        <authorList>
            <person name="Gottschalk A."/>
            <person name="Almedom R.B."/>
            <person name="Schedletzky T."/>
            <person name="Anderson S.D."/>
            <person name="Yates J.R. III"/>
            <person name="Schafer W.R."/>
        </authorList>
    </citation>
    <scope>FUNCTION</scope>
    <scope>INTERACTION WITH NICOTINIC ACETYLCHOLINE RECEPTOR</scope>
    <scope>DISRUPTION PHENOTYPE</scope>
</reference>
<reference evidence="9" key="3">
    <citation type="journal article" date="2009" name="EMBO J.">
        <title>An ER-resident membrane protein complex regulates nicotinic acetylcholine receptor subunit composition at the synapse.</title>
        <authorList>
            <person name="Almedom R.B."/>
            <person name="Liewald J.F."/>
            <person name="Hernando G."/>
            <person name="Schultheis C."/>
            <person name="Rayes D."/>
            <person name="Pan J."/>
            <person name="Schedletzky T."/>
            <person name="Hutter H."/>
            <person name="Bouzat C."/>
            <person name="Gottschalk A."/>
        </authorList>
    </citation>
    <scope>FUNCTION</scope>
    <scope>INTERACTION WITH NRA-4</scope>
    <scope>SUBCELLULAR LOCATION</scope>
    <scope>TISSUE SPECIFICITY</scope>
</reference>
<reference evidence="9" key="4">
    <citation type="journal article" date="2014" name="J. Biol. Chem.">
        <title>NRA-2, a nicalin homolog, regulates neuronal death by controlling surface localization of toxic Caenorhabditis elegans DEG/ENaC channels.</title>
        <authorList>
            <person name="Kamat S."/>
            <person name="Yeola S."/>
            <person name="Zhang W."/>
            <person name="Bianchi L."/>
            <person name="Driscoll M."/>
        </authorList>
    </citation>
    <scope>FUNCTION</scope>
    <scope>DISRUPTION PHENOTYPE</scope>
</reference>
<organism evidence="11">
    <name type="scientific">Caenorhabditis elegans</name>
    <dbReference type="NCBI Taxonomy" id="6239"/>
    <lineage>
        <taxon>Eukaryota</taxon>
        <taxon>Metazoa</taxon>
        <taxon>Ecdysozoa</taxon>
        <taxon>Nematoda</taxon>
        <taxon>Chromadorea</taxon>
        <taxon>Rhabditida</taxon>
        <taxon>Rhabditina</taxon>
        <taxon>Rhabditomorpha</taxon>
        <taxon>Rhabditoidea</taxon>
        <taxon>Rhabditidae</taxon>
        <taxon>Peloderinae</taxon>
        <taxon>Caenorhabditis</taxon>
    </lineage>
</organism>
<gene>
    <name evidence="7 13" type="primary">nra-2</name>
    <name evidence="13" type="ORF">T05F1.1</name>
</gene>
<dbReference type="EMBL" id="BX284601">
    <property type="protein sequence ID" value="CAB04692.1"/>
    <property type="molecule type" value="Genomic_DNA"/>
</dbReference>
<dbReference type="EMBL" id="BX284601">
    <property type="protein sequence ID" value="CAN86915.1"/>
    <property type="molecule type" value="Genomic_DNA"/>
</dbReference>
<dbReference type="PIR" id="T24538">
    <property type="entry name" value="T24538"/>
</dbReference>
<dbReference type="RefSeq" id="NP_001122514.1">
    <molecule id="A5JYX8-1"/>
    <property type="nucleotide sequence ID" value="NM_001129042.4"/>
</dbReference>
<dbReference type="RefSeq" id="NP_492553.1">
    <molecule id="A5JYX8-2"/>
    <property type="nucleotide sequence ID" value="NM_060152.5"/>
</dbReference>
<dbReference type="SMR" id="A5JYX8"/>
<dbReference type="FunCoup" id="A5JYX8">
    <property type="interactions" value="2987"/>
</dbReference>
<dbReference type="IntAct" id="A5JYX8">
    <property type="interactions" value="1"/>
</dbReference>
<dbReference type="MINT" id="A5JYX8"/>
<dbReference type="STRING" id="6239.T05F1.1b.1"/>
<dbReference type="GlyCosmos" id="A5JYX8">
    <property type="glycosylation" value="1 site, No reported glycans"/>
</dbReference>
<dbReference type="PaxDb" id="6239-T05F1.1b"/>
<dbReference type="PeptideAtlas" id="A5JYX8"/>
<dbReference type="EnsemblMetazoa" id="T05F1.1a.1">
    <molecule id="A5JYX8-2"/>
    <property type="protein sequence ID" value="T05F1.1a.1"/>
    <property type="gene ID" value="WBGene00011488"/>
</dbReference>
<dbReference type="EnsemblMetazoa" id="T05F1.1b.1">
    <molecule id="A5JYX8-1"/>
    <property type="protein sequence ID" value="T05F1.1b.1"/>
    <property type="gene ID" value="WBGene00011488"/>
</dbReference>
<dbReference type="GeneID" id="172803"/>
<dbReference type="KEGG" id="cel:CELE_T05F1.1"/>
<dbReference type="UCSC" id="T05F1.1b">
    <property type="organism name" value="c. elegans"/>
</dbReference>
<dbReference type="AGR" id="WB:WBGene00011488"/>
<dbReference type="CTD" id="172803"/>
<dbReference type="WormBase" id="T05F1.1a">
    <molecule id="A5JYX8-2"/>
    <property type="protein sequence ID" value="CE13267"/>
    <property type="gene ID" value="WBGene00011488"/>
    <property type="gene designation" value="nra-2"/>
</dbReference>
<dbReference type="WormBase" id="T05F1.1b">
    <molecule id="A5JYX8-1"/>
    <property type="protein sequence ID" value="CE41012"/>
    <property type="gene ID" value="WBGene00011488"/>
    <property type="gene designation" value="nra-2"/>
</dbReference>
<dbReference type="eggNOG" id="KOG2526">
    <property type="taxonomic scope" value="Eukaryota"/>
</dbReference>
<dbReference type="GeneTree" id="ENSGT00500000044945"/>
<dbReference type="HOGENOM" id="CLU_034102_2_0_1"/>
<dbReference type="InParanoid" id="A5JYX8"/>
<dbReference type="OMA" id="WSTSRHC"/>
<dbReference type="OrthoDB" id="5913609at2759"/>
<dbReference type="PhylomeDB" id="A5JYX8"/>
<dbReference type="PRO" id="PR:A5JYX8"/>
<dbReference type="Proteomes" id="UP000001940">
    <property type="component" value="Chromosome I"/>
</dbReference>
<dbReference type="Bgee" id="WBGene00011488">
    <property type="expression patterns" value="Expressed in germ line (C elegans) and 4 other cell types or tissues"/>
</dbReference>
<dbReference type="GO" id="GO:0005783">
    <property type="term" value="C:endoplasmic reticulum"/>
    <property type="evidence" value="ECO:0000314"/>
    <property type="project" value="WormBase"/>
</dbReference>
<dbReference type="GO" id="GO:0005789">
    <property type="term" value="C:endoplasmic reticulum membrane"/>
    <property type="evidence" value="ECO:0000318"/>
    <property type="project" value="GO_Central"/>
</dbReference>
<dbReference type="GO" id="GO:0065003">
    <property type="term" value="P:protein-containing complex assembly"/>
    <property type="evidence" value="ECO:0000315"/>
    <property type="project" value="UniProtKB"/>
</dbReference>
<dbReference type="GO" id="GO:0090313">
    <property type="term" value="P:regulation of protein targeting to membrane"/>
    <property type="evidence" value="ECO:0000315"/>
    <property type="project" value="UniProtKB"/>
</dbReference>
<dbReference type="GO" id="GO:0009966">
    <property type="term" value="P:regulation of signal transduction"/>
    <property type="evidence" value="ECO:0000318"/>
    <property type="project" value="GO_Central"/>
</dbReference>
<dbReference type="CDD" id="cd03882">
    <property type="entry name" value="M28_nicalin_like"/>
    <property type="match status" value="1"/>
</dbReference>
<dbReference type="Gene3D" id="3.40.630.10">
    <property type="entry name" value="Zn peptidases"/>
    <property type="match status" value="1"/>
</dbReference>
<dbReference type="InterPro" id="IPR018247">
    <property type="entry name" value="EF_Hand_1_Ca_BS"/>
</dbReference>
<dbReference type="InterPro" id="IPR016574">
    <property type="entry name" value="Nicalin"/>
</dbReference>
<dbReference type="PANTHER" id="PTHR31826">
    <property type="entry name" value="NICALIN"/>
    <property type="match status" value="1"/>
</dbReference>
<dbReference type="Pfam" id="PF05450">
    <property type="entry name" value="Nicastrin"/>
    <property type="match status" value="1"/>
</dbReference>
<dbReference type="PIRSF" id="PIRSF011018">
    <property type="entry name" value="Nicalin"/>
    <property type="match status" value="1"/>
</dbReference>
<dbReference type="SUPFAM" id="SSF53187">
    <property type="entry name" value="Zn-dependent exopeptidases"/>
    <property type="match status" value="1"/>
</dbReference>
<dbReference type="PROSITE" id="PS00018">
    <property type="entry name" value="EF_HAND_1"/>
    <property type="match status" value="1"/>
</dbReference>
<protein>
    <recommendedName>
        <fullName evidence="2">Nicalin</fullName>
    </recommendedName>
    <alternativeName>
        <fullName evidence="9">Inactive aminopeptidase nra-2</fullName>
    </alternativeName>
    <alternativeName>
        <fullName evidence="8">Nicotinic receptor-associated protein 2</fullName>
    </alternativeName>
</protein>
<accession>A5JYX8</accession>
<accession>O18033</accession>
<name>NCLN_CAEEL</name>